<sequence>MTSKFLLVSFILAALSLSTTFSLQPDQQKVLLVSFDGFRWDYLYKVPTPHFHYIMKYGVHVKQVTNVFITKTYPNHYTLVTGLFAENHGIVANDMFDPIRNKSFSLDHMNIYDSKFWEEATPIWITNQRAGHTSGAAMWPGTDVKIHKRFPTHYMPYNESVSFEDRVAKIIEWFTSKEPINLGLLYWEDPDDMGHHLGPDSPLMGPVISDIDKKLGYLIQMLKKAKLWNTLNLIITSDHGMTQCSEERLIELDQYLDKDHYTLIDQSPVAAILPKEGKFDEVYEALTHAHPNLTVYKKEDVPERWHYKYNSRIQPIIAVADEGWHILQNKSDDFLLGNHGYDNALADMHPIFLAHGPAFRKNFSKEAMNSTDLYPLLCHLLNITAMPHNGSFWNVQDLLNSAMPRVVPYTQSTILLPGSVKPAEYDQEGSYPYFIGVSLGSIIVIVFFVIFIKHLIHSQIPALQDMHAEIAQPLLQA</sequence>
<dbReference type="EC" id="3.1.-.-"/>
<dbReference type="EMBL" id="AY358514">
    <property type="protein sequence ID" value="AAQ88878.1"/>
    <property type="molecule type" value="mRNA"/>
</dbReference>
<dbReference type="EMBL" id="AL035701">
    <property type="status" value="NOT_ANNOTATED_CDS"/>
    <property type="molecule type" value="Genomic_DNA"/>
</dbReference>
<dbReference type="EMBL" id="CH471081">
    <property type="protein sequence ID" value="EAX04293.1"/>
    <property type="molecule type" value="Genomic_DNA"/>
</dbReference>
<dbReference type="EMBL" id="BC027615">
    <property type="protein sequence ID" value="AAH27615.1"/>
    <property type="molecule type" value="mRNA"/>
</dbReference>
<dbReference type="CCDS" id="CCDS4915.1"/>
<dbReference type="PIR" id="A59391">
    <property type="entry name" value="A59391"/>
</dbReference>
<dbReference type="RefSeq" id="NP_001277001.1">
    <property type="nucleotide sequence ID" value="NM_001290072.2"/>
</dbReference>
<dbReference type="RefSeq" id="NP_001277002.1">
    <property type="nucleotide sequence ID" value="NM_001290073.1"/>
</dbReference>
<dbReference type="RefSeq" id="NP_067547.1">
    <property type="nucleotide sequence ID" value="NM_021572.6"/>
</dbReference>
<dbReference type="RefSeq" id="XP_005249317.1">
    <property type="nucleotide sequence ID" value="XM_005249260.5"/>
</dbReference>
<dbReference type="RefSeq" id="XP_011513088.1">
    <property type="nucleotide sequence ID" value="XM_011514786.4"/>
</dbReference>
<dbReference type="RefSeq" id="XP_054212113.1">
    <property type="nucleotide sequence ID" value="XM_054356138.1"/>
</dbReference>
<dbReference type="RefSeq" id="XP_054212114.1">
    <property type="nucleotide sequence ID" value="XM_054356139.1"/>
</dbReference>
<dbReference type="PDB" id="5VEM">
    <property type="method" value="X-ray"/>
    <property type="resolution" value="2.60 A"/>
    <property type="chains" value="A/B/C=25-430"/>
</dbReference>
<dbReference type="PDBsum" id="5VEM"/>
<dbReference type="SMR" id="Q9UJA9"/>
<dbReference type="BioGRID" id="121860">
    <property type="interactions" value="7"/>
</dbReference>
<dbReference type="FunCoup" id="Q9UJA9">
    <property type="interactions" value="334"/>
</dbReference>
<dbReference type="IntAct" id="Q9UJA9">
    <property type="interactions" value="5"/>
</dbReference>
<dbReference type="MINT" id="Q9UJA9"/>
<dbReference type="STRING" id="9606.ENSP00000360436"/>
<dbReference type="GlyCosmos" id="Q9UJA9">
    <property type="glycosylation" value="8 sites, No reported glycans"/>
</dbReference>
<dbReference type="GlyGen" id="Q9UJA9">
    <property type="glycosylation" value="10 sites, 6 N-linked glycans (2 sites), 2 O-linked glycans (2 sites)"/>
</dbReference>
<dbReference type="iPTMnet" id="Q9UJA9"/>
<dbReference type="PhosphoSitePlus" id="Q9UJA9"/>
<dbReference type="BioMuta" id="ENPP5"/>
<dbReference type="DMDM" id="50401201"/>
<dbReference type="jPOST" id="Q9UJA9"/>
<dbReference type="MassIVE" id="Q9UJA9"/>
<dbReference type="PaxDb" id="9606-ENSP00000360436"/>
<dbReference type="PeptideAtlas" id="Q9UJA9"/>
<dbReference type="ProteomicsDB" id="84616"/>
<dbReference type="Antibodypedia" id="2350">
    <property type="antibodies" value="157 antibodies from 24 providers"/>
</dbReference>
<dbReference type="DNASU" id="59084"/>
<dbReference type="Ensembl" id="ENST00000230565.3">
    <property type="protein sequence ID" value="ENSP00000230565.3"/>
    <property type="gene ID" value="ENSG00000112796.10"/>
</dbReference>
<dbReference type="Ensembl" id="ENST00000371383.7">
    <property type="protein sequence ID" value="ENSP00000360436.1"/>
    <property type="gene ID" value="ENSG00000112796.10"/>
</dbReference>
<dbReference type="GeneID" id="59084"/>
<dbReference type="KEGG" id="hsa:59084"/>
<dbReference type="MANE-Select" id="ENST00000371383.7">
    <property type="protein sequence ID" value="ENSP00000360436.1"/>
    <property type="RefSeq nucleotide sequence ID" value="NM_001290072.2"/>
    <property type="RefSeq protein sequence ID" value="NP_001277001.1"/>
</dbReference>
<dbReference type="UCSC" id="uc003oxz.2">
    <property type="organism name" value="human"/>
</dbReference>
<dbReference type="AGR" id="HGNC:13717"/>
<dbReference type="CTD" id="59084"/>
<dbReference type="DisGeNET" id="59084"/>
<dbReference type="GeneCards" id="ENPP5"/>
<dbReference type="HGNC" id="HGNC:13717">
    <property type="gene designation" value="ENPP5"/>
</dbReference>
<dbReference type="HPA" id="ENSG00000112796">
    <property type="expression patterns" value="Tissue enriched (epididymis)"/>
</dbReference>
<dbReference type="MIM" id="617001">
    <property type="type" value="gene"/>
</dbReference>
<dbReference type="neXtProt" id="NX_Q9UJA9"/>
<dbReference type="OpenTargets" id="ENSG00000112796"/>
<dbReference type="PharmGKB" id="PA27795"/>
<dbReference type="VEuPathDB" id="HostDB:ENSG00000112796"/>
<dbReference type="eggNOG" id="KOG2645">
    <property type="taxonomic scope" value="Eukaryota"/>
</dbReference>
<dbReference type="GeneTree" id="ENSGT00940000160562"/>
<dbReference type="HOGENOM" id="CLU_017594_1_2_1"/>
<dbReference type="InParanoid" id="Q9UJA9"/>
<dbReference type="OMA" id="DEYVSRD"/>
<dbReference type="OrthoDB" id="415411at2759"/>
<dbReference type="PAN-GO" id="Q9UJA9">
    <property type="GO annotations" value="0 GO annotations based on evolutionary models"/>
</dbReference>
<dbReference type="PhylomeDB" id="Q9UJA9"/>
<dbReference type="TreeFam" id="TF330032"/>
<dbReference type="PathwayCommons" id="Q9UJA9"/>
<dbReference type="BioGRID-ORCS" id="59084">
    <property type="hits" value="8 hits in 1143 CRISPR screens"/>
</dbReference>
<dbReference type="GenomeRNAi" id="59084"/>
<dbReference type="Pharos" id="Q9UJA9">
    <property type="development level" value="Tbio"/>
</dbReference>
<dbReference type="PRO" id="PR:Q9UJA9"/>
<dbReference type="Proteomes" id="UP000005640">
    <property type="component" value="Chromosome 6"/>
</dbReference>
<dbReference type="RNAct" id="Q9UJA9">
    <property type="molecule type" value="protein"/>
</dbReference>
<dbReference type="Bgee" id="ENSG00000112796">
    <property type="expression patterns" value="Expressed in corpus epididymis and 163 other cell types or tissues"/>
</dbReference>
<dbReference type="GO" id="GO:0005576">
    <property type="term" value="C:extracellular region"/>
    <property type="evidence" value="ECO:0007669"/>
    <property type="project" value="UniProtKB-SubCell"/>
</dbReference>
<dbReference type="GO" id="GO:0005886">
    <property type="term" value="C:plasma membrane"/>
    <property type="evidence" value="ECO:0000250"/>
    <property type="project" value="UniProtKB"/>
</dbReference>
<dbReference type="GO" id="GO:0000210">
    <property type="term" value="F:NAD+ diphosphatase activity"/>
    <property type="evidence" value="ECO:0000314"/>
    <property type="project" value="UniProtKB"/>
</dbReference>
<dbReference type="GO" id="GO:0008270">
    <property type="term" value="F:zinc ion binding"/>
    <property type="evidence" value="ECO:0000314"/>
    <property type="project" value="UniProtKB"/>
</dbReference>
<dbReference type="GO" id="GO:0007154">
    <property type="term" value="P:cell communication"/>
    <property type="evidence" value="ECO:0000250"/>
    <property type="project" value="UniProtKB"/>
</dbReference>
<dbReference type="CDD" id="cd16018">
    <property type="entry name" value="Enpp"/>
    <property type="match status" value="1"/>
</dbReference>
<dbReference type="FunFam" id="3.30.1360.180:FF:000004">
    <property type="entry name" value="Ectonucleotide pyrophosphatase/phosphodiesterase family member 4"/>
    <property type="match status" value="1"/>
</dbReference>
<dbReference type="Gene3D" id="3.30.1360.180">
    <property type="match status" value="1"/>
</dbReference>
<dbReference type="Gene3D" id="3.40.720.10">
    <property type="entry name" value="Alkaline Phosphatase, subunit A"/>
    <property type="match status" value="1"/>
</dbReference>
<dbReference type="InterPro" id="IPR017850">
    <property type="entry name" value="Alkaline_phosphatase_core_sf"/>
</dbReference>
<dbReference type="InterPro" id="IPR002591">
    <property type="entry name" value="Phosphodiest/P_Trfase"/>
</dbReference>
<dbReference type="PANTHER" id="PTHR10151">
    <property type="entry name" value="ECTONUCLEOTIDE PYROPHOSPHATASE/PHOSPHODIESTERASE"/>
    <property type="match status" value="1"/>
</dbReference>
<dbReference type="PANTHER" id="PTHR10151:SF125">
    <property type="entry name" value="ECTONUCLEOTIDE PYROPHOSPHATASE_PHOSPHODIESTERASE FAMILY MEMBER 5"/>
    <property type="match status" value="1"/>
</dbReference>
<dbReference type="Pfam" id="PF01663">
    <property type="entry name" value="Phosphodiest"/>
    <property type="match status" value="1"/>
</dbReference>
<dbReference type="SUPFAM" id="SSF53649">
    <property type="entry name" value="Alkaline phosphatase-like"/>
    <property type="match status" value="1"/>
</dbReference>
<reference evidence="9" key="1">
    <citation type="journal article" date="2003" name="Genome Res.">
        <title>The secreted protein discovery initiative (SPDI), a large-scale effort to identify novel human secreted and transmembrane proteins: a bioinformatics assessment.</title>
        <authorList>
            <person name="Clark H.F."/>
            <person name="Gurney A.L."/>
            <person name="Abaya E."/>
            <person name="Baker K."/>
            <person name="Baldwin D.T."/>
            <person name="Brush J."/>
            <person name="Chen J."/>
            <person name="Chow B."/>
            <person name="Chui C."/>
            <person name="Crowley C."/>
            <person name="Currell B."/>
            <person name="Deuel B."/>
            <person name="Dowd P."/>
            <person name="Eaton D."/>
            <person name="Foster J.S."/>
            <person name="Grimaldi C."/>
            <person name="Gu Q."/>
            <person name="Hass P.E."/>
            <person name="Heldens S."/>
            <person name="Huang A."/>
            <person name="Kim H.S."/>
            <person name="Klimowski L."/>
            <person name="Jin Y."/>
            <person name="Johnson S."/>
            <person name="Lee J."/>
            <person name="Lewis L."/>
            <person name="Liao D."/>
            <person name="Mark M.R."/>
            <person name="Robbie E."/>
            <person name="Sanchez C."/>
            <person name="Schoenfeld J."/>
            <person name="Seshagiri S."/>
            <person name="Simmons L."/>
            <person name="Singh J."/>
            <person name="Smith V."/>
            <person name="Stinson J."/>
            <person name="Vagts A."/>
            <person name="Vandlen R.L."/>
            <person name="Watanabe C."/>
            <person name="Wieand D."/>
            <person name="Woods K."/>
            <person name="Xie M.-H."/>
            <person name="Yansura D.G."/>
            <person name="Yi S."/>
            <person name="Yu G."/>
            <person name="Yuan J."/>
            <person name="Zhang M."/>
            <person name="Zhang Z."/>
            <person name="Goddard A.D."/>
            <person name="Wood W.I."/>
            <person name="Godowski P.J."/>
            <person name="Gray A.M."/>
        </authorList>
    </citation>
    <scope>NUCLEOTIDE SEQUENCE [LARGE SCALE MRNA]</scope>
    <scope>VARIANTS ILE-6 AND VAL-171</scope>
</reference>
<reference key="2">
    <citation type="journal article" date="2003" name="Nature">
        <title>The DNA sequence and analysis of human chromosome 6.</title>
        <authorList>
            <person name="Mungall A.J."/>
            <person name="Palmer S.A."/>
            <person name="Sims S.K."/>
            <person name="Edwards C.A."/>
            <person name="Ashurst J.L."/>
            <person name="Wilming L."/>
            <person name="Jones M.C."/>
            <person name="Horton R."/>
            <person name="Hunt S.E."/>
            <person name="Scott C.E."/>
            <person name="Gilbert J.G.R."/>
            <person name="Clamp M.E."/>
            <person name="Bethel G."/>
            <person name="Milne S."/>
            <person name="Ainscough R."/>
            <person name="Almeida J.P."/>
            <person name="Ambrose K.D."/>
            <person name="Andrews T.D."/>
            <person name="Ashwell R.I.S."/>
            <person name="Babbage A.K."/>
            <person name="Bagguley C.L."/>
            <person name="Bailey J."/>
            <person name="Banerjee R."/>
            <person name="Barker D.J."/>
            <person name="Barlow K.F."/>
            <person name="Bates K."/>
            <person name="Beare D.M."/>
            <person name="Beasley H."/>
            <person name="Beasley O."/>
            <person name="Bird C.P."/>
            <person name="Blakey S.E."/>
            <person name="Bray-Allen S."/>
            <person name="Brook J."/>
            <person name="Brown A.J."/>
            <person name="Brown J.Y."/>
            <person name="Burford D.C."/>
            <person name="Burrill W."/>
            <person name="Burton J."/>
            <person name="Carder C."/>
            <person name="Carter N.P."/>
            <person name="Chapman J.C."/>
            <person name="Clark S.Y."/>
            <person name="Clark G."/>
            <person name="Clee C.M."/>
            <person name="Clegg S."/>
            <person name="Cobley V."/>
            <person name="Collier R.E."/>
            <person name="Collins J.E."/>
            <person name="Colman L.K."/>
            <person name="Corby N.R."/>
            <person name="Coville G.J."/>
            <person name="Culley K.M."/>
            <person name="Dhami P."/>
            <person name="Davies J."/>
            <person name="Dunn M."/>
            <person name="Earthrowl M.E."/>
            <person name="Ellington A.E."/>
            <person name="Evans K.A."/>
            <person name="Faulkner L."/>
            <person name="Francis M.D."/>
            <person name="Frankish A."/>
            <person name="Frankland J."/>
            <person name="French L."/>
            <person name="Garner P."/>
            <person name="Garnett J."/>
            <person name="Ghori M.J."/>
            <person name="Gilby L.M."/>
            <person name="Gillson C.J."/>
            <person name="Glithero R.J."/>
            <person name="Grafham D.V."/>
            <person name="Grant M."/>
            <person name="Gribble S."/>
            <person name="Griffiths C."/>
            <person name="Griffiths M.N.D."/>
            <person name="Hall R."/>
            <person name="Halls K.S."/>
            <person name="Hammond S."/>
            <person name="Harley J.L."/>
            <person name="Hart E.A."/>
            <person name="Heath P.D."/>
            <person name="Heathcott R."/>
            <person name="Holmes S.J."/>
            <person name="Howden P.J."/>
            <person name="Howe K.L."/>
            <person name="Howell G.R."/>
            <person name="Huckle E."/>
            <person name="Humphray S.J."/>
            <person name="Humphries M.D."/>
            <person name="Hunt A.R."/>
            <person name="Johnson C.M."/>
            <person name="Joy A.A."/>
            <person name="Kay M."/>
            <person name="Keenan S.J."/>
            <person name="Kimberley A.M."/>
            <person name="King A."/>
            <person name="Laird G.K."/>
            <person name="Langford C."/>
            <person name="Lawlor S."/>
            <person name="Leongamornlert D.A."/>
            <person name="Leversha M."/>
            <person name="Lloyd C.R."/>
            <person name="Lloyd D.M."/>
            <person name="Loveland J.E."/>
            <person name="Lovell J."/>
            <person name="Martin S."/>
            <person name="Mashreghi-Mohammadi M."/>
            <person name="Maslen G.L."/>
            <person name="Matthews L."/>
            <person name="McCann O.T."/>
            <person name="McLaren S.J."/>
            <person name="McLay K."/>
            <person name="McMurray A."/>
            <person name="Moore M.J.F."/>
            <person name="Mullikin J.C."/>
            <person name="Niblett D."/>
            <person name="Nickerson T."/>
            <person name="Novik K.L."/>
            <person name="Oliver K."/>
            <person name="Overton-Larty E.K."/>
            <person name="Parker A."/>
            <person name="Patel R."/>
            <person name="Pearce A.V."/>
            <person name="Peck A.I."/>
            <person name="Phillimore B.J.C.T."/>
            <person name="Phillips S."/>
            <person name="Plumb R.W."/>
            <person name="Porter K.M."/>
            <person name="Ramsey Y."/>
            <person name="Ranby S.A."/>
            <person name="Rice C.M."/>
            <person name="Ross M.T."/>
            <person name="Searle S.M."/>
            <person name="Sehra H.K."/>
            <person name="Sheridan E."/>
            <person name="Skuce C.D."/>
            <person name="Smith S."/>
            <person name="Smith M."/>
            <person name="Spraggon L."/>
            <person name="Squares S.L."/>
            <person name="Steward C.A."/>
            <person name="Sycamore N."/>
            <person name="Tamlyn-Hall G."/>
            <person name="Tester J."/>
            <person name="Theaker A.J."/>
            <person name="Thomas D.W."/>
            <person name="Thorpe A."/>
            <person name="Tracey A."/>
            <person name="Tromans A."/>
            <person name="Tubby B."/>
            <person name="Wall M."/>
            <person name="Wallis J.M."/>
            <person name="West A.P."/>
            <person name="White S.S."/>
            <person name="Whitehead S.L."/>
            <person name="Whittaker H."/>
            <person name="Wild A."/>
            <person name="Willey D.J."/>
            <person name="Wilmer T.E."/>
            <person name="Wood J.M."/>
            <person name="Wray P.W."/>
            <person name="Wyatt J.C."/>
            <person name="Young L."/>
            <person name="Younger R.M."/>
            <person name="Bentley D.R."/>
            <person name="Coulson A."/>
            <person name="Durbin R.M."/>
            <person name="Hubbard T."/>
            <person name="Sulston J.E."/>
            <person name="Dunham I."/>
            <person name="Rogers J."/>
            <person name="Beck S."/>
        </authorList>
    </citation>
    <scope>NUCLEOTIDE SEQUENCE [LARGE SCALE GENOMIC DNA]</scope>
</reference>
<reference key="3">
    <citation type="submission" date="2005-07" db="EMBL/GenBank/DDBJ databases">
        <authorList>
            <person name="Mural R.J."/>
            <person name="Istrail S."/>
            <person name="Sutton G.G."/>
            <person name="Florea L."/>
            <person name="Halpern A.L."/>
            <person name="Mobarry C.M."/>
            <person name="Lippert R."/>
            <person name="Walenz B."/>
            <person name="Shatkay H."/>
            <person name="Dew I."/>
            <person name="Miller J.R."/>
            <person name="Flanigan M.J."/>
            <person name="Edwards N.J."/>
            <person name="Bolanos R."/>
            <person name="Fasulo D."/>
            <person name="Halldorsson B.V."/>
            <person name="Hannenhalli S."/>
            <person name="Turner R."/>
            <person name="Yooseph S."/>
            <person name="Lu F."/>
            <person name="Nusskern D.R."/>
            <person name="Shue B.C."/>
            <person name="Zheng X.H."/>
            <person name="Zhong F."/>
            <person name="Delcher A.L."/>
            <person name="Huson D.H."/>
            <person name="Kravitz S.A."/>
            <person name="Mouchard L."/>
            <person name="Reinert K."/>
            <person name="Remington K.A."/>
            <person name="Clark A.G."/>
            <person name="Waterman M.S."/>
            <person name="Eichler E.E."/>
            <person name="Adams M.D."/>
            <person name="Hunkapiller M.W."/>
            <person name="Myers E.W."/>
            <person name="Venter J.C."/>
        </authorList>
    </citation>
    <scope>NUCLEOTIDE SEQUENCE [LARGE SCALE GENOMIC DNA]</scope>
</reference>
<reference evidence="7 8" key="4">
    <citation type="journal article" date="2004" name="Genome Res.">
        <title>The status, quality, and expansion of the NIH full-length cDNA project: the Mammalian Gene Collection (MGC).</title>
        <authorList>
            <consortium name="The MGC Project Team"/>
        </authorList>
    </citation>
    <scope>NUCLEOTIDE SEQUENCE [LARGE SCALE MRNA]</scope>
    <source>
        <tissue evidence="5">Testis</tissue>
    </source>
</reference>
<reference evidence="11" key="5">
    <citation type="journal article" date="2017" name="FEBS J.">
        <title>A key tyrosine substitution restricts nucleotide hydrolysis by the ectoenzyme NPP5.</title>
        <authorList>
            <person name="Gorelik A."/>
            <person name="Randriamihaja A."/>
            <person name="Illes K."/>
            <person name="Nagar B."/>
        </authorList>
    </citation>
    <scope>X-RAY CRYSTALLOGRAPHY (2.60 ANGSTROMS) OF 25-430</scope>
    <scope>ACTIVE SITE</scope>
    <scope>METAL-BINDING SITES</scope>
    <scope>COFACTOR</scope>
</reference>
<name>ENPP5_HUMAN</name>
<organism>
    <name type="scientific">Homo sapiens</name>
    <name type="common">Human</name>
    <dbReference type="NCBI Taxonomy" id="9606"/>
    <lineage>
        <taxon>Eukaryota</taxon>
        <taxon>Metazoa</taxon>
        <taxon>Chordata</taxon>
        <taxon>Craniata</taxon>
        <taxon>Vertebrata</taxon>
        <taxon>Euteleostomi</taxon>
        <taxon>Mammalia</taxon>
        <taxon>Eutheria</taxon>
        <taxon>Euarchontoglires</taxon>
        <taxon>Primates</taxon>
        <taxon>Haplorrhini</taxon>
        <taxon>Catarrhini</taxon>
        <taxon>Hominidae</taxon>
        <taxon>Homo</taxon>
    </lineage>
</organism>
<evidence type="ECO:0000250" key="1">
    <source>
        <dbReference type="UniProtKB" id="P84039"/>
    </source>
</evidence>
<evidence type="ECO:0000250" key="2">
    <source>
        <dbReference type="UniProtKB" id="Q9EQG7"/>
    </source>
</evidence>
<evidence type="ECO:0000255" key="3"/>
<evidence type="ECO:0000269" key="4">
    <source>
    </source>
</evidence>
<evidence type="ECO:0000269" key="5">
    <source>
    </source>
</evidence>
<evidence type="ECO:0000269" key="6">
    <source>
    </source>
</evidence>
<evidence type="ECO:0000305" key="7"/>
<evidence type="ECO:0000312" key="8">
    <source>
        <dbReference type="EMBL" id="AAH27615.1"/>
    </source>
</evidence>
<evidence type="ECO:0000312" key="9">
    <source>
        <dbReference type="EMBL" id="AAQ88878.1"/>
    </source>
</evidence>
<evidence type="ECO:0000312" key="10">
    <source>
        <dbReference type="HGNC" id="HGNC:13717"/>
    </source>
</evidence>
<evidence type="ECO:0007744" key="11">
    <source>
        <dbReference type="PDB" id="5VEM"/>
    </source>
</evidence>
<evidence type="ECO:0007829" key="12">
    <source>
        <dbReference type="PDB" id="5VEM"/>
    </source>
</evidence>
<proteinExistence type="evidence at protein level"/>
<accession>Q9UJA9</accession>
<accession>Q5TFV2</accession>
<accession>Q6UX49</accession>
<gene>
    <name evidence="10" type="primary">ENPP5</name>
    <name type="ORF">UNQ550/PRO1107</name>
</gene>
<protein>
    <recommendedName>
        <fullName>Ectonucleotide pyrophosphatase/phosphodiesterase family member 5</fullName>
        <shortName>E-NPP 5</shortName>
        <shortName>NPP-5</shortName>
        <ecNumber>3.1.-.-</ecNumber>
    </recommendedName>
</protein>
<keyword id="KW-0002">3D-structure</keyword>
<keyword id="KW-0325">Glycoprotein</keyword>
<keyword id="KW-0378">Hydrolase</keyword>
<keyword id="KW-0472">Membrane</keyword>
<keyword id="KW-0479">Metal-binding</keyword>
<keyword id="KW-1267">Proteomics identification</keyword>
<keyword id="KW-1185">Reference proteome</keyword>
<keyword id="KW-0964">Secreted</keyword>
<keyword id="KW-0732">Signal</keyword>
<keyword id="KW-0812">Transmembrane</keyword>
<keyword id="KW-1133">Transmembrane helix</keyword>
<keyword id="KW-0862">Zinc</keyword>
<feature type="signal peptide" evidence="1">
    <location>
        <begin position="1"/>
        <end position="24"/>
    </location>
</feature>
<feature type="chain" id="PRO_0000036401" description="Ectonucleotide pyrophosphatase/phosphodiesterase family member 5">
    <location>
        <begin position="25"/>
        <end position="477"/>
    </location>
</feature>
<feature type="transmembrane region" description="Helical" evidence="3">
    <location>
        <begin position="432"/>
        <end position="452"/>
    </location>
</feature>
<feature type="active site" description="Nucleophile" evidence="6 11">
    <location>
        <position position="72"/>
    </location>
</feature>
<feature type="binding site" evidence="6 11">
    <location>
        <position position="36"/>
    </location>
    <ligand>
        <name>Zn(2+)</name>
        <dbReference type="ChEBI" id="CHEBI:29105"/>
        <label>1</label>
        <note>catalytic</note>
    </ligand>
</feature>
<feature type="binding site" evidence="6 11">
    <location>
        <position position="72"/>
    </location>
    <ligand>
        <name>Zn(2+)</name>
        <dbReference type="ChEBI" id="CHEBI:29105"/>
        <label>1</label>
        <note>catalytic</note>
    </ligand>
</feature>
<feature type="binding site" evidence="6 11">
    <location>
        <position position="191"/>
    </location>
    <ligand>
        <name>Zn(2+)</name>
        <dbReference type="ChEBI" id="CHEBI:29105"/>
        <label>2</label>
        <note>catalytic</note>
    </ligand>
</feature>
<feature type="binding site" evidence="6 11">
    <location>
        <position position="195"/>
    </location>
    <ligand>
        <name>Zn(2+)</name>
        <dbReference type="ChEBI" id="CHEBI:29105"/>
        <label>2</label>
        <note>catalytic</note>
    </ligand>
</feature>
<feature type="binding site" evidence="6 11">
    <location>
        <position position="238"/>
    </location>
    <ligand>
        <name>Zn(2+)</name>
        <dbReference type="ChEBI" id="CHEBI:29105"/>
        <label>1</label>
        <note>catalytic</note>
    </ligand>
</feature>
<feature type="binding site" evidence="6 11">
    <location>
        <position position="239"/>
    </location>
    <ligand>
        <name>Zn(2+)</name>
        <dbReference type="ChEBI" id="CHEBI:29105"/>
        <label>1</label>
        <note>catalytic</note>
    </ligand>
</feature>
<feature type="binding site" evidence="6 11">
    <location>
        <position position="339"/>
    </location>
    <ligand>
        <name>Zn(2+)</name>
        <dbReference type="ChEBI" id="CHEBI:29105"/>
        <label>2</label>
        <note>catalytic</note>
    </ligand>
</feature>
<feature type="glycosylation site" description="N-linked (GlcNAc...) asparagine" evidence="3">
    <location>
        <position position="101"/>
    </location>
</feature>
<feature type="glycosylation site" description="N-linked (GlcNAc...) asparagine" evidence="3">
    <location>
        <position position="158"/>
    </location>
</feature>
<feature type="glycosylation site" description="N-linked (GlcNAc...) asparagine" evidence="3">
    <location>
        <position position="292"/>
    </location>
</feature>
<feature type="glycosylation site" description="N-linked (GlcNAc...) asparagine" evidence="3">
    <location>
        <position position="329"/>
    </location>
</feature>
<feature type="glycosylation site" description="N-linked (GlcNAc...) asparagine" evidence="3">
    <location>
        <position position="362"/>
    </location>
</feature>
<feature type="glycosylation site" description="N-linked (GlcNAc...) asparagine" evidence="3">
    <location>
        <position position="369"/>
    </location>
</feature>
<feature type="glycosylation site" description="N-linked (GlcNAc...) asparagine" evidence="3">
    <location>
        <position position="382"/>
    </location>
</feature>
<feature type="glycosylation site" description="N-linked (GlcNAc...) asparagine" evidence="3">
    <location>
        <position position="389"/>
    </location>
</feature>
<feature type="sequence variant" id="VAR_020248" description="In dbSNP:rs3806995." evidence="4">
    <original>L</original>
    <variation>I</variation>
    <location>
        <position position="6"/>
    </location>
</feature>
<feature type="sequence variant" id="VAR_033918" description="In dbSNP:rs34109856.">
    <original>R</original>
    <variation>P</variation>
    <location>
        <position position="39"/>
    </location>
</feature>
<feature type="sequence variant" id="VAR_052940" description="In dbSNP:rs34432940.">
    <original>I</original>
    <variation>V</variation>
    <location>
        <position position="69"/>
    </location>
</feature>
<feature type="sequence variant" id="VAR_024693" description="In dbSNP:rs6926570." evidence="4">
    <original>I</original>
    <variation>V</variation>
    <location>
        <position position="171"/>
    </location>
</feature>
<feature type="sequence variant" id="VAR_052941" description="In dbSNP:rs16874326.">
    <original>Y</original>
    <variation>C</variation>
    <location>
        <position position="283"/>
    </location>
</feature>
<feature type="sequence conflict" description="In Ref. 1; AAQ88878." evidence="7" ref="1">
    <original>P</original>
    <variation>L</variation>
    <location>
        <position position="25"/>
    </location>
</feature>
<feature type="strand" evidence="12">
    <location>
        <begin position="30"/>
        <end position="35"/>
    </location>
</feature>
<feature type="helix" evidence="12">
    <location>
        <begin position="42"/>
        <end position="45"/>
    </location>
</feature>
<feature type="helix" evidence="12">
    <location>
        <begin position="49"/>
        <end position="56"/>
    </location>
</feature>
<feature type="strand" evidence="12">
    <location>
        <begin position="58"/>
        <end position="65"/>
    </location>
</feature>
<feature type="helix" evidence="12">
    <location>
        <begin position="72"/>
        <end position="79"/>
    </location>
</feature>
<feature type="helix" evidence="12">
    <location>
        <begin position="85"/>
        <end position="88"/>
    </location>
</feature>
<feature type="strand" evidence="12">
    <location>
        <begin position="93"/>
        <end position="97"/>
    </location>
</feature>
<feature type="turn" evidence="12">
    <location>
        <begin position="98"/>
        <end position="101"/>
    </location>
</feature>
<feature type="strand" evidence="12">
    <location>
        <begin position="102"/>
        <end position="105"/>
    </location>
</feature>
<feature type="turn" evidence="12">
    <location>
        <begin position="106"/>
        <end position="109"/>
    </location>
</feature>
<feature type="helix" evidence="12">
    <location>
        <begin position="114"/>
        <end position="117"/>
    </location>
</feature>
<feature type="helix" evidence="12">
    <location>
        <begin position="123"/>
        <end position="129"/>
    </location>
</feature>
<feature type="strand" evidence="12">
    <location>
        <begin position="134"/>
        <end position="138"/>
    </location>
</feature>
<feature type="turn" evidence="12">
    <location>
        <begin position="140"/>
        <end position="143"/>
    </location>
</feature>
<feature type="helix" evidence="12">
    <location>
        <begin position="163"/>
        <end position="175"/>
    </location>
</feature>
<feature type="strand" evidence="12">
    <location>
        <begin position="176"/>
        <end position="178"/>
    </location>
</feature>
<feature type="strand" evidence="12">
    <location>
        <begin position="181"/>
        <end position="187"/>
    </location>
</feature>
<feature type="helix" evidence="12">
    <location>
        <begin position="191"/>
        <end position="197"/>
    </location>
</feature>
<feature type="helix" evidence="12">
    <location>
        <begin position="204"/>
        <end position="224"/>
    </location>
</feature>
<feature type="turn" evidence="12">
    <location>
        <begin position="228"/>
        <end position="230"/>
    </location>
</feature>
<feature type="strand" evidence="12">
    <location>
        <begin position="231"/>
        <end position="236"/>
    </location>
</feature>
<feature type="strand" evidence="12">
    <location>
        <begin position="248"/>
        <end position="251"/>
    </location>
</feature>
<feature type="helix" evidence="12">
    <location>
        <begin position="252"/>
        <end position="255"/>
    </location>
</feature>
<feature type="helix" evidence="12">
    <location>
        <begin position="258"/>
        <end position="260"/>
    </location>
</feature>
<feature type="strand" evidence="12">
    <location>
        <begin position="261"/>
        <end position="265"/>
    </location>
</feature>
<feature type="strand" evidence="12">
    <location>
        <begin position="267"/>
        <end position="274"/>
    </location>
</feature>
<feature type="helix" evidence="12">
    <location>
        <begin position="279"/>
        <end position="287"/>
    </location>
</feature>
<feature type="strand" evidence="12">
    <location>
        <begin position="293"/>
        <end position="297"/>
    </location>
</feature>
<feature type="helix" evidence="12">
    <location>
        <begin position="298"/>
        <end position="300"/>
    </location>
</feature>
<feature type="helix" evidence="12">
    <location>
        <begin position="303"/>
        <end position="305"/>
    </location>
</feature>
<feature type="strand" evidence="12">
    <location>
        <begin position="315"/>
        <end position="320"/>
    </location>
</feature>
<feature type="strand" evidence="12">
    <location>
        <begin position="325"/>
        <end position="329"/>
    </location>
</feature>
<feature type="strand" evidence="12">
    <location>
        <begin position="336"/>
        <end position="338"/>
    </location>
</feature>
<feature type="helix" evidence="12">
    <location>
        <begin position="346"/>
        <end position="348"/>
    </location>
</feature>
<feature type="strand" evidence="12">
    <location>
        <begin position="352"/>
        <end position="356"/>
    </location>
</feature>
<feature type="strand" evidence="12">
    <location>
        <begin position="361"/>
        <end position="369"/>
    </location>
</feature>
<feature type="helix" evidence="12">
    <location>
        <begin position="370"/>
        <end position="372"/>
    </location>
</feature>
<feature type="helix" evidence="12">
    <location>
        <begin position="373"/>
        <end position="381"/>
    </location>
</feature>
<feature type="helix" evidence="12">
    <location>
        <begin position="392"/>
        <end position="398"/>
    </location>
</feature>
<comment type="function">
    <text evidence="1 2">Can hydrolyze NAD but cannot hydrolyze nucleotide di- and triphosphates. Lacks lysopholipase D activity. May play a role in neuronal cell communication.</text>
</comment>
<comment type="cofactor">
    <cofactor evidence="6">
        <name>Zn(2+)</name>
        <dbReference type="ChEBI" id="CHEBI:29105"/>
    </cofactor>
    <text evidence="6">Binds 2 Zn(2+) ions per subunit.</text>
</comment>
<comment type="subcellular location">
    <subcellularLocation>
        <location evidence="7">Secreted</location>
    </subcellularLocation>
    <subcellularLocation>
        <location evidence="7">Membrane</location>
        <topology evidence="7">Single-pass membrane protein</topology>
    </subcellularLocation>
</comment>
<comment type="PTM">
    <text evidence="1">N-glycosylated.</text>
</comment>
<comment type="similarity">
    <text evidence="7">Belongs to the nucleotide pyrophosphatase/phosphodiesterase family.</text>
</comment>